<organism>
    <name type="scientific">Drosophila sechellia</name>
    <name type="common">Fruit fly</name>
    <dbReference type="NCBI Taxonomy" id="7238"/>
    <lineage>
        <taxon>Eukaryota</taxon>
        <taxon>Metazoa</taxon>
        <taxon>Ecdysozoa</taxon>
        <taxon>Arthropoda</taxon>
        <taxon>Hexapoda</taxon>
        <taxon>Insecta</taxon>
        <taxon>Pterygota</taxon>
        <taxon>Neoptera</taxon>
        <taxon>Endopterygota</taxon>
        <taxon>Diptera</taxon>
        <taxon>Brachycera</taxon>
        <taxon>Muscomorpha</taxon>
        <taxon>Ephydroidea</taxon>
        <taxon>Drosophilidae</taxon>
        <taxon>Drosophila</taxon>
        <taxon>Sophophora</taxon>
    </lineage>
</organism>
<accession>B4I414</accession>
<proteinExistence type="inferred from homology"/>
<evidence type="ECO:0000250" key="1"/>
<evidence type="ECO:0000250" key="2">
    <source>
        <dbReference type="UniProtKB" id="P35439"/>
    </source>
</evidence>
<evidence type="ECO:0000250" key="3">
    <source>
        <dbReference type="UniProtKB" id="Q05586"/>
    </source>
</evidence>
<evidence type="ECO:0000250" key="4">
    <source>
        <dbReference type="UniProtKB" id="Q24418"/>
    </source>
</evidence>
<evidence type="ECO:0000255" key="5"/>
<evidence type="ECO:0000256" key="6">
    <source>
        <dbReference type="SAM" id="MobiDB-lite"/>
    </source>
</evidence>
<evidence type="ECO:0000305" key="7"/>
<evidence type="ECO:0000312" key="8">
    <source>
        <dbReference type="EMBL" id="EDW54957.1"/>
    </source>
</evidence>
<sequence length="997" mass="112143">MAVAGFVFCRPLFGLAIVLLVAPIDAAQRHTASDNPSTYNIGGVLSNSDSEEHFSTTIKHLNFDQQYVPRKVTYYDKTIRMDKNPIKTVFNVCDKLIENRVYAVVVSHEQTSGDLSPAAVSYTSGFYSIPVIGISSRDAAFSDKNIHVSFLRTVPPYYHQADVWLEMLSHFAYTKVIIIHSSDTDGRAILGRFQTTSQTYYDDVDVRATVELIVEFEPKLESFTEHLIDMKTAQSRVYLMYASTEDAQVIFRDAGEYNMTGEGHVWIVTEQALFSNNTPDGVLGLQLEHAHSDKGHIRDSVYVLASAIKEMISNETIAEAPKDCGDSAVNWESGKRLFQYLKSRNITGETGQVAFDDNGDRIYAGYDVINIREQQKKHVVGKFSYDSMRAKMRMRINDSEIIWPGKQRRKPEGIMIPTHLKLLTIEEKPFVYVRRMGDDEFRCEPDERPCPLFNNSDATANEFCCRGYCIDLLIELSKRINFTYDLALSPDGQFGHYILRNSTGAMTLRKEWTGLIGELVNERADMIVAPLTINPERAEYIEFSKPFKYQGITILEKKPSRSSTLVSFLQPFSNTLWILVMVSVHVVALVLYLLDRFSPFGRFKLSHSDSNEEKALNLSSAVWFAWGVLLNSGIGEGTPRSFSARVLGMVWAGFAMIIVASYTANLAAFLVLERPKTKLSGINDARLRNTMENLTCATVKGSSVDMYFRRQVELSNMYRTMEANNYATAEQAIQDVKKGKLMAFIWDSSRLEYEASKDCELVTAGELFGRSGYGIGLQKGSPWTDAVTLAILEFHESGFMEKLDKQWIFHGHVQQNCELFEKTPNTLGLKNMAGVFILVGVGIAGGVGLIIIEVIYKKHQVKKQKRLDIARHAADKWRGTIEKRKTIRASLAMQRQYNVGLNSTHAPGTISLAVDKRRYPRLGQRLGPERAWPGDAADVLRIRRPYELGKPGQSPKVMAANQPGMPMPMLGKTRPQQSVLPPRYSPGYTSDVSHLVV</sequence>
<dbReference type="EMBL" id="CH480821">
    <property type="protein sequence ID" value="EDW54957.1"/>
    <property type="molecule type" value="Genomic_DNA"/>
</dbReference>
<dbReference type="SMR" id="B4I414"/>
<dbReference type="STRING" id="7238.B4I414"/>
<dbReference type="GlyCosmos" id="B4I414">
    <property type="glycosylation" value="8 sites, No reported glycans"/>
</dbReference>
<dbReference type="EnsemblMetazoa" id="FBtr0193612">
    <property type="protein sequence ID" value="FBpp0192104"/>
    <property type="gene ID" value="FBgn0165573"/>
</dbReference>
<dbReference type="EnsemblMetazoa" id="XM_002038384.2">
    <property type="protein sequence ID" value="XP_002038420.1"/>
    <property type="gene ID" value="LOC6613956"/>
</dbReference>
<dbReference type="GeneID" id="6613956"/>
<dbReference type="KEGG" id="dse:6613956"/>
<dbReference type="CTD" id="40665"/>
<dbReference type="HOGENOM" id="CLU_007257_2_0_1"/>
<dbReference type="OMA" id="FANNTPD"/>
<dbReference type="OrthoDB" id="13956at7215"/>
<dbReference type="PhylomeDB" id="B4I414"/>
<dbReference type="Proteomes" id="UP000001292">
    <property type="component" value="Unassembled WGS sequence"/>
</dbReference>
<dbReference type="GO" id="GO:0017146">
    <property type="term" value="C:NMDA selective glutamate receptor complex"/>
    <property type="evidence" value="ECO:0000250"/>
    <property type="project" value="UniProtKB"/>
</dbReference>
<dbReference type="GO" id="GO:0014069">
    <property type="term" value="C:postsynaptic density"/>
    <property type="evidence" value="ECO:0007669"/>
    <property type="project" value="UniProtKB-SubCell"/>
</dbReference>
<dbReference type="GO" id="GO:0045211">
    <property type="term" value="C:postsynaptic membrane"/>
    <property type="evidence" value="ECO:0000250"/>
    <property type="project" value="UniProtKB"/>
</dbReference>
<dbReference type="GO" id="GO:0004970">
    <property type="term" value="F:glutamate-gated receptor activity"/>
    <property type="evidence" value="ECO:0000250"/>
    <property type="project" value="UniProtKB"/>
</dbReference>
<dbReference type="GO" id="GO:0004972">
    <property type="term" value="F:NMDA glutamate receptor activity"/>
    <property type="evidence" value="ECO:0007669"/>
    <property type="project" value="EnsemblMetazoa"/>
</dbReference>
<dbReference type="GO" id="GO:0048149">
    <property type="term" value="P:behavioral response to ethanol"/>
    <property type="evidence" value="ECO:0007669"/>
    <property type="project" value="EnsemblMetazoa"/>
</dbReference>
<dbReference type="GO" id="GO:0055074">
    <property type="term" value="P:calcium ion homeostasis"/>
    <property type="evidence" value="ECO:0000250"/>
    <property type="project" value="UniProtKB"/>
</dbReference>
<dbReference type="GO" id="GO:0007268">
    <property type="term" value="P:chemical synaptic transmission"/>
    <property type="evidence" value="ECO:0000250"/>
    <property type="project" value="UniProtKB"/>
</dbReference>
<dbReference type="GO" id="GO:0035235">
    <property type="term" value="P:ionotropic glutamate receptor signaling pathway"/>
    <property type="evidence" value="ECO:0000250"/>
    <property type="project" value="UniProtKB"/>
</dbReference>
<dbReference type="GO" id="GO:0007616">
    <property type="term" value="P:long-term memory"/>
    <property type="evidence" value="ECO:0000250"/>
    <property type="project" value="UniProtKB"/>
</dbReference>
<dbReference type="GO" id="GO:0072375">
    <property type="term" value="P:medium-term memory"/>
    <property type="evidence" value="ECO:0007669"/>
    <property type="project" value="EnsemblMetazoa"/>
</dbReference>
<dbReference type="GO" id="GO:0008355">
    <property type="term" value="P:olfactory learning"/>
    <property type="evidence" value="ECO:0000250"/>
    <property type="project" value="UniProtKB"/>
</dbReference>
<dbReference type="GO" id="GO:0042331">
    <property type="term" value="P:phototaxis"/>
    <property type="evidence" value="ECO:0007669"/>
    <property type="project" value="EnsemblMetazoa"/>
</dbReference>
<dbReference type="GO" id="GO:0042391">
    <property type="term" value="P:regulation of membrane potential"/>
    <property type="evidence" value="ECO:0000250"/>
    <property type="project" value="UniProtKB"/>
</dbReference>
<dbReference type="GO" id="GO:0050975">
    <property type="term" value="P:sensory perception of touch"/>
    <property type="evidence" value="ECO:0007669"/>
    <property type="project" value="EnsemblMetazoa"/>
</dbReference>
<dbReference type="CDD" id="cd06379">
    <property type="entry name" value="PBP1_iGluR_NMDA_NR1"/>
    <property type="match status" value="1"/>
</dbReference>
<dbReference type="CDD" id="cd13719">
    <property type="entry name" value="PBP2_iGluR_NMDA_Nr1"/>
    <property type="match status" value="1"/>
</dbReference>
<dbReference type="FunFam" id="3.40.190.10:FF:000177">
    <property type="entry name" value="Glutamate [NMDA] receptor subunit 1"/>
    <property type="match status" value="1"/>
</dbReference>
<dbReference type="FunFam" id="3.40.50.2300:FF:000266">
    <property type="entry name" value="Glutamate [NMDA] receptor subunit 1"/>
    <property type="match status" value="1"/>
</dbReference>
<dbReference type="FunFam" id="3.40.190.10:FF:000010">
    <property type="entry name" value="glutamate receptor ionotropic, NMDA 1 isoform X1"/>
    <property type="match status" value="1"/>
</dbReference>
<dbReference type="FunFam" id="3.40.50.2300:FF:000025">
    <property type="entry name" value="glutamate receptor ionotropic, NMDA 1 isoform X1"/>
    <property type="match status" value="1"/>
</dbReference>
<dbReference type="Gene3D" id="1.10.287.70">
    <property type="match status" value="1"/>
</dbReference>
<dbReference type="Gene3D" id="3.40.50.2300">
    <property type="match status" value="2"/>
</dbReference>
<dbReference type="Gene3D" id="3.40.190.10">
    <property type="entry name" value="Periplasmic binding protein-like II"/>
    <property type="match status" value="2"/>
</dbReference>
<dbReference type="InterPro" id="IPR001828">
    <property type="entry name" value="ANF_lig-bd_rcpt"/>
</dbReference>
<dbReference type="InterPro" id="IPR018882">
    <property type="entry name" value="CaM-bd_C0_NMDA_rcpt_NR1"/>
</dbReference>
<dbReference type="InterPro" id="IPR019594">
    <property type="entry name" value="Glu/Gly-bd"/>
</dbReference>
<dbReference type="InterPro" id="IPR001508">
    <property type="entry name" value="Iono_Glu_rcpt_met"/>
</dbReference>
<dbReference type="InterPro" id="IPR015683">
    <property type="entry name" value="Ionotropic_Glu_rcpt"/>
</dbReference>
<dbReference type="InterPro" id="IPR001320">
    <property type="entry name" value="Iontro_rcpt_C"/>
</dbReference>
<dbReference type="InterPro" id="IPR049872">
    <property type="entry name" value="NMDA1-like_ligand-bd"/>
</dbReference>
<dbReference type="InterPro" id="IPR049873">
    <property type="entry name" value="NMDA1-like_N"/>
</dbReference>
<dbReference type="InterPro" id="IPR028082">
    <property type="entry name" value="Peripla_BP_I"/>
</dbReference>
<dbReference type="PANTHER" id="PTHR18966">
    <property type="entry name" value="IONOTROPIC GLUTAMATE RECEPTOR"/>
    <property type="match status" value="1"/>
</dbReference>
<dbReference type="Pfam" id="PF01094">
    <property type="entry name" value="ANF_receptor"/>
    <property type="match status" value="1"/>
</dbReference>
<dbReference type="Pfam" id="PF10562">
    <property type="entry name" value="CaM_bdg_C0"/>
    <property type="match status" value="1"/>
</dbReference>
<dbReference type="Pfam" id="PF00060">
    <property type="entry name" value="Lig_chan"/>
    <property type="match status" value="1"/>
</dbReference>
<dbReference type="Pfam" id="PF10613">
    <property type="entry name" value="Lig_chan-Glu_bd"/>
    <property type="match status" value="1"/>
</dbReference>
<dbReference type="PRINTS" id="PR00177">
    <property type="entry name" value="NMDARECEPTOR"/>
</dbReference>
<dbReference type="SMART" id="SM00918">
    <property type="entry name" value="Lig_chan-Glu_bd"/>
    <property type="match status" value="1"/>
</dbReference>
<dbReference type="SMART" id="SM00079">
    <property type="entry name" value="PBPe"/>
    <property type="match status" value="1"/>
</dbReference>
<dbReference type="SUPFAM" id="SSF53822">
    <property type="entry name" value="Periplasmic binding protein-like I"/>
    <property type="match status" value="1"/>
</dbReference>
<dbReference type="SUPFAM" id="SSF53850">
    <property type="entry name" value="Periplasmic binding protein-like II"/>
    <property type="match status" value="1"/>
</dbReference>
<dbReference type="SUPFAM" id="SSF81324">
    <property type="entry name" value="Voltage-gated potassium channels"/>
    <property type="match status" value="1"/>
</dbReference>
<comment type="function">
    <text evidence="2 4">NMDA receptor subtype of glutamate-gated ion channels with high calcium permeability and voltage-dependent sensitivity to magnesium. Mediated by glycine. This protein plays a key role in synaptic plasticity, synaptogenesis, excitotoxicity, memory acquisition and learning. It mediates neuronal functions in glutamate neurotransmission. Is involved in the cell surface targeting of NMDA receptors. Plays a role in associative learning and in long-term memory consolidation (By similarity).</text>
</comment>
<comment type="subunit">
    <text evidence="1">Forms a heteromeric NMDA channel with Nmdar2.</text>
</comment>
<comment type="subcellular location">
    <subcellularLocation>
        <location evidence="4">Cell membrane</location>
        <topology evidence="4">Multi-pass membrane protein</topology>
    </subcellularLocation>
    <subcellularLocation>
        <location evidence="4">Postsynaptic cell membrane</location>
    </subcellularLocation>
    <subcellularLocation>
        <location evidence="4">Postsynaptic density</location>
    </subcellularLocation>
</comment>
<comment type="similarity">
    <text evidence="7">Belongs to the glutamate-gated ion channel (TC 1.A.10.1) family.</text>
</comment>
<name>NMDA1_DROSE</name>
<keyword id="KW-0106">Calcium</keyword>
<keyword id="KW-1003">Cell membrane</keyword>
<keyword id="KW-1015">Disulfide bond</keyword>
<keyword id="KW-0325">Glycoprotein</keyword>
<keyword id="KW-0407">Ion channel</keyword>
<keyword id="KW-0406">Ion transport</keyword>
<keyword id="KW-1071">Ligand-gated ion channel</keyword>
<keyword id="KW-0460">Magnesium</keyword>
<keyword id="KW-0472">Membrane</keyword>
<keyword id="KW-0597">Phosphoprotein</keyword>
<keyword id="KW-0628">Postsynaptic cell membrane</keyword>
<keyword id="KW-0675">Receptor</keyword>
<keyword id="KW-1185">Reference proteome</keyword>
<keyword id="KW-0732">Signal</keyword>
<keyword id="KW-0770">Synapse</keyword>
<keyword id="KW-0812">Transmembrane</keyword>
<keyword id="KW-1133">Transmembrane helix</keyword>
<keyword id="KW-0813">Transport</keyword>
<protein>
    <recommendedName>
        <fullName evidence="4">Glutamate [NMDA] receptor subunit 1</fullName>
    </recommendedName>
</protein>
<gene>
    <name evidence="4" type="primary">Nmdar1</name>
    <name type="ORF">GM10627</name>
</gene>
<feature type="signal peptide" evidence="5">
    <location>
        <begin position="1"/>
        <end position="26"/>
    </location>
</feature>
<feature type="chain" id="PRO_0000364000" description="Glutamate [NMDA] receptor subunit 1" evidence="5">
    <location>
        <begin position="27"/>
        <end position="997"/>
    </location>
</feature>
<feature type="topological domain" description="Extracellular" evidence="5">
    <location>
        <begin position="27"/>
        <end position="573"/>
    </location>
</feature>
<feature type="transmembrane region" description="Helical" evidence="5">
    <location>
        <begin position="574"/>
        <end position="594"/>
    </location>
</feature>
<feature type="topological domain" description="Cytoplasmic" evidence="5">
    <location>
        <begin position="595"/>
        <end position="651"/>
    </location>
</feature>
<feature type="transmembrane region" description="Helical" evidence="5">
    <location>
        <begin position="652"/>
        <end position="672"/>
    </location>
</feature>
<feature type="topological domain" description="Extracellular" evidence="5">
    <location>
        <begin position="673"/>
        <end position="831"/>
    </location>
</feature>
<feature type="transmembrane region" description="Helical" evidence="5">
    <location>
        <begin position="832"/>
        <end position="852"/>
    </location>
</feature>
<feature type="topological domain" description="Cytoplasmic" evidence="5">
    <location>
        <begin position="853"/>
        <end position="997"/>
    </location>
</feature>
<feature type="region of interest" description="Disordered" evidence="6">
    <location>
        <begin position="970"/>
        <end position="997"/>
    </location>
</feature>
<feature type="compositionally biased region" description="Polar residues" evidence="6">
    <location>
        <begin position="987"/>
        <end position="997"/>
    </location>
</feature>
<feature type="binding site" evidence="2">
    <location>
        <begin position="530"/>
        <end position="532"/>
    </location>
    <ligand>
        <name>glycine</name>
        <dbReference type="ChEBI" id="CHEBI:57305"/>
    </ligand>
</feature>
<feature type="binding site" evidence="2">
    <location>
        <position position="537"/>
    </location>
    <ligand>
        <name>glycine</name>
        <dbReference type="ChEBI" id="CHEBI:57305"/>
    </ligand>
</feature>
<feature type="binding site" evidence="2">
    <location>
        <position position="703"/>
    </location>
    <ligand>
        <name>glycine</name>
        <dbReference type="ChEBI" id="CHEBI:57305"/>
    </ligand>
</feature>
<feature type="binding site" evidence="2">
    <location>
        <position position="747"/>
    </location>
    <ligand>
        <name>glycine</name>
        <dbReference type="ChEBI" id="CHEBI:57305"/>
    </ligand>
</feature>
<feature type="glycosylation site" description="N-linked (GlcNAc...) asparagine" evidence="5">
    <location>
        <position position="258"/>
    </location>
</feature>
<feature type="glycosylation site" description="N-linked (GlcNAc...) asparagine" evidence="5">
    <location>
        <position position="314"/>
    </location>
</feature>
<feature type="glycosylation site" description="N-linked (GlcNAc...) asparagine" evidence="5">
    <location>
        <position position="345"/>
    </location>
</feature>
<feature type="glycosylation site" description="N-linked (GlcNAc...) asparagine" evidence="5">
    <location>
        <position position="397"/>
    </location>
</feature>
<feature type="glycosylation site" description="N-linked (GlcNAc...) asparagine" evidence="5">
    <location>
        <position position="454"/>
    </location>
</feature>
<feature type="glycosylation site" description="N-linked (GlcNAc...) asparagine" evidence="5">
    <location>
        <position position="481"/>
    </location>
</feature>
<feature type="glycosylation site" description="N-linked (GlcNAc...) asparagine" evidence="5">
    <location>
        <position position="501"/>
    </location>
</feature>
<feature type="glycosylation site" description="N-linked (GlcNAc...) asparagine" evidence="5">
    <location>
        <position position="693"/>
    </location>
</feature>
<feature type="disulfide bond" description="Interchain" evidence="3">
    <location>
        <position position="93"/>
    </location>
</feature>
<reference evidence="8" key="1">
    <citation type="journal article" date="2007" name="Nature">
        <title>Evolution of genes and genomes on the Drosophila phylogeny.</title>
        <authorList>
            <consortium name="Drosophila 12 genomes consortium"/>
        </authorList>
    </citation>
    <scope>NUCLEOTIDE SEQUENCE [LARGE SCALE GENOMIC DNA]</scope>
    <source>
        <strain evidence="8">Rob3c / Tucson 14021-0248.25</strain>
    </source>
</reference>